<comment type="function">
    <text evidence="1">Catalyzes a salvage reaction resulting in the formation of AMP, that is energically less costly than de novo synthesis.</text>
</comment>
<comment type="catalytic activity">
    <reaction evidence="1">
        <text>AMP + diphosphate = 5-phospho-alpha-D-ribose 1-diphosphate + adenine</text>
        <dbReference type="Rhea" id="RHEA:16609"/>
        <dbReference type="ChEBI" id="CHEBI:16708"/>
        <dbReference type="ChEBI" id="CHEBI:33019"/>
        <dbReference type="ChEBI" id="CHEBI:58017"/>
        <dbReference type="ChEBI" id="CHEBI:456215"/>
        <dbReference type="EC" id="2.4.2.7"/>
    </reaction>
</comment>
<comment type="pathway">
    <text evidence="1">Purine metabolism; AMP biosynthesis via salvage pathway; AMP from adenine: step 1/1.</text>
</comment>
<comment type="subunit">
    <text evidence="1">Homodimer.</text>
</comment>
<comment type="subcellular location">
    <subcellularLocation>
        <location evidence="1">Cytoplasm</location>
    </subcellularLocation>
</comment>
<comment type="similarity">
    <text evidence="1">Belongs to the purine/pyrimidine phosphoribosyltransferase family.</text>
</comment>
<sequence>MDLKQYVSEVQDWPKPGVSFKDITTIMDNGEAYGYATDKIVEYAKDRDVDIVVGPEARGFIIGCPVAYSMGIGFAPVRKEGKLPREVIRYEYDLEYGTNVLTMHKDAIKPGQRVLITDDLLATGGTIEAAIKLVEKLGGIVVGIAFIIELKYLNGIEKIKDYDVMSLISYDE</sequence>
<gene>
    <name evidence="1" type="primary">apt</name>
    <name type="ordered locus">SAV1635</name>
</gene>
<accession>P68778</accession>
<accession>O32418</accession>
<feature type="chain" id="PRO_0000149450" description="Adenine phosphoribosyltransferase">
    <location>
        <begin position="1"/>
        <end position="172"/>
    </location>
</feature>
<dbReference type="EC" id="2.4.2.7" evidence="1"/>
<dbReference type="EMBL" id="BA000017">
    <property type="protein sequence ID" value="BAB57797.1"/>
    <property type="molecule type" value="Genomic_DNA"/>
</dbReference>
<dbReference type="RefSeq" id="WP_000364542.1">
    <property type="nucleotide sequence ID" value="NC_002758.2"/>
</dbReference>
<dbReference type="SMR" id="P68778"/>
<dbReference type="KEGG" id="sav:SAV1635"/>
<dbReference type="HOGENOM" id="CLU_063339_3_0_9"/>
<dbReference type="PhylomeDB" id="P68778"/>
<dbReference type="UniPathway" id="UPA00588">
    <property type="reaction ID" value="UER00646"/>
</dbReference>
<dbReference type="Proteomes" id="UP000002481">
    <property type="component" value="Chromosome"/>
</dbReference>
<dbReference type="GO" id="GO:0005737">
    <property type="term" value="C:cytoplasm"/>
    <property type="evidence" value="ECO:0007669"/>
    <property type="project" value="UniProtKB-SubCell"/>
</dbReference>
<dbReference type="GO" id="GO:0002055">
    <property type="term" value="F:adenine binding"/>
    <property type="evidence" value="ECO:0007669"/>
    <property type="project" value="TreeGrafter"/>
</dbReference>
<dbReference type="GO" id="GO:0003999">
    <property type="term" value="F:adenine phosphoribosyltransferase activity"/>
    <property type="evidence" value="ECO:0007669"/>
    <property type="project" value="UniProtKB-UniRule"/>
</dbReference>
<dbReference type="GO" id="GO:0016208">
    <property type="term" value="F:AMP binding"/>
    <property type="evidence" value="ECO:0007669"/>
    <property type="project" value="TreeGrafter"/>
</dbReference>
<dbReference type="GO" id="GO:0006168">
    <property type="term" value="P:adenine salvage"/>
    <property type="evidence" value="ECO:0007669"/>
    <property type="project" value="InterPro"/>
</dbReference>
<dbReference type="GO" id="GO:0044209">
    <property type="term" value="P:AMP salvage"/>
    <property type="evidence" value="ECO:0007669"/>
    <property type="project" value="UniProtKB-UniRule"/>
</dbReference>
<dbReference type="GO" id="GO:0006166">
    <property type="term" value="P:purine ribonucleoside salvage"/>
    <property type="evidence" value="ECO:0007669"/>
    <property type="project" value="UniProtKB-KW"/>
</dbReference>
<dbReference type="CDD" id="cd06223">
    <property type="entry name" value="PRTases_typeI"/>
    <property type="match status" value="1"/>
</dbReference>
<dbReference type="FunFam" id="3.40.50.2020:FF:000004">
    <property type="entry name" value="Adenine phosphoribosyltransferase"/>
    <property type="match status" value="1"/>
</dbReference>
<dbReference type="Gene3D" id="3.40.50.2020">
    <property type="match status" value="1"/>
</dbReference>
<dbReference type="HAMAP" id="MF_00004">
    <property type="entry name" value="Aden_phosphoribosyltr"/>
    <property type="match status" value="1"/>
</dbReference>
<dbReference type="InterPro" id="IPR005764">
    <property type="entry name" value="Ade_phspho_trans"/>
</dbReference>
<dbReference type="InterPro" id="IPR000836">
    <property type="entry name" value="PRibTrfase_dom"/>
</dbReference>
<dbReference type="InterPro" id="IPR029057">
    <property type="entry name" value="PRTase-like"/>
</dbReference>
<dbReference type="InterPro" id="IPR050054">
    <property type="entry name" value="UPRTase/APRTase"/>
</dbReference>
<dbReference type="NCBIfam" id="TIGR01090">
    <property type="entry name" value="apt"/>
    <property type="match status" value="1"/>
</dbReference>
<dbReference type="NCBIfam" id="NF002633">
    <property type="entry name" value="PRK02304.1-2"/>
    <property type="match status" value="1"/>
</dbReference>
<dbReference type="NCBIfam" id="NF002634">
    <property type="entry name" value="PRK02304.1-3"/>
    <property type="match status" value="1"/>
</dbReference>
<dbReference type="NCBIfam" id="NF002636">
    <property type="entry name" value="PRK02304.1-5"/>
    <property type="match status" value="1"/>
</dbReference>
<dbReference type="PANTHER" id="PTHR32315">
    <property type="entry name" value="ADENINE PHOSPHORIBOSYLTRANSFERASE"/>
    <property type="match status" value="1"/>
</dbReference>
<dbReference type="PANTHER" id="PTHR32315:SF3">
    <property type="entry name" value="ADENINE PHOSPHORIBOSYLTRANSFERASE"/>
    <property type="match status" value="1"/>
</dbReference>
<dbReference type="Pfam" id="PF00156">
    <property type="entry name" value="Pribosyltran"/>
    <property type="match status" value="1"/>
</dbReference>
<dbReference type="SUPFAM" id="SSF53271">
    <property type="entry name" value="PRTase-like"/>
    <property type="match status" value="1"/>
</dbReference>
<organism>
    <name type="scientific">Staphylococcus aureus (strain Mu50 / ATCC 700699)</name>
    <dbReference type="NCBI Taxonomy" id="158878"/>
    <lineage>
        <taxon>Bacteria</taxon>
        <taxon>Bacillati</taxon>
        <taxon>Bacillota</taxon>
        <taxon>Bacilli</taxon>
        <taxon>Bacillales</taxon>
        <taxon>Staphylococcaceae</taxon>
        <taxon>Staphylococcus</taxon>
    </lineage>
</organism>
<keyword id="KW-0963">Cytoplasm</keyword>
<keyword id="KW-0328">Glycosyltransferase</keyword>
<keyword id="KW-0660">Purine salvage</keyword>
<keyword id="KW-0808">Transferase</keyword>
<protein>
    <recommendedName>
        <fullName evidence="1">Adenine phosphoribosyltransferase</fullName>
        <shortName evidence="1">APRT</shortName>
        <ecNumber evidence="1">2.4.2.7</ecNumber>
    </recommendedName>
</protein>
<proteinExistence type="inferred from homology"/>
<evidence type="ECO:0000255" key="1">
    <source>
        <dbReference type="HAMAP-Rule" id="MF_00004"/>
    </source>
</evidence>
<name>APT_STAAM</name>
<reference key="1">
    <citation type="journal article" date="2001" name="Lancet">
        <title>Whole genome sequencing of meticillin-resistant Staphylococcus aureus.</title>
        <authorList>
            <person name="Kuroda M."/>
            <person name="Ohta T."/>
            <person name="Uchiyama I."/>
            <person name="Baba T."/>
            <person name="Yuzawa H."/>
            <person name="Kobayashi I."/>
            <person name="Cui L."/>
            <person name="Oguchi A."/>
            <person name="Aoki K."/>
            <person name="Nagai Y."/>
            <person name="Lian J.-Q."/>
            <person name="Ito T."/>
            <person name="Kanamori M."/>
            <person name="Matsumaru H."/>
            <person name="Maruyama A."/>
            <person name="Murakami H."/>
            <person name="Hosoyama A."/>
            <person name="Mizutani-Ui Y."/>
            <person name="Takahashi N.K."/>
            <person name="Sawano T."/>
            <person name="Inoue R."/>
            <person name="Kaito C."/>
            <person name="Sekimizu K."/>
            <person name="Hirakawa H."/>
            <person name="Kuhara S."/>
            <person name="Goto S."/>
            <person name="Yabuzaki J."/>
            <person name="Kanehisa M."/>
            <person name="Yamashita A."/>
            <person name="Oshima K."/>
            <person name="Furuya K."/>
            <person name="Yoshino C."/>
            <person name="Shiba T."/>
            <person name="Hattori M."/>
            <person name="Ogasawara N."/>
            <person name="Hayashi H."/>
            <person name="Hiramatsu K."/>
        </authorList>
    </citation>
    <scope>NUCLEOTIDE SEQUENCE [LARGE SCALE GENOMIC DNA]</scope>
    <source>
        <strain>Mu50 / ATCC 700699</strain>
    </source>
</reference>